<protein>
    <recommendedName>
        <fullName evidence="10">Eukaryotic initiation factor 4A-III</fullName>
        <shortName evidence="9">eIF-4A-III</shortName>
        <shortName evidence="9">eIF4A-III</shortName>
        <ecNumber evidence="10">3.6.4.13</ecNumber>
    </recommendedName>
</protein>
<comment type="function">
    <text evidence="5 6 7 8 9 10">ATP-dependent RNA helicase (PubMed:22961380). Core component of the splicing-dependent multiprotein exon junction complex (EJC) deposited at splice junctions on mRNAs (PubMed:14973490, PubMed:22961380). Involved in exon definition of genes containing long introns, including the rolled/MAPK gene (PubMed:20946982, PubMed:20946983). Has a role in oskar mRNA localization at the posterior pole of the developing oocyte (PubMed:14973490).</text>
</comment>
<comment type="catalytic activity">
    <reaction evidence="10">
        <text>ATP + H2O = ADP + phosphate + H(+)</text>
        <dbReference type="Rhea" id="RHEA:13065"/>
        <dbReference type="ChEBI" id="CHEBI:15377"/>
        <dbReference type="ChEBI" id="CHEBI:15378"/>
        <dbReference type="ChEBI" id="CHEBI:30616"/>
        <dbReference type="ChEBI" id="CHEBI:43474"/>
        <dbReference type="ChEBI" id="CHEBI:456216"/>
        <dbReference type="EC" id="3.6.4.13"/>
    </reaction>
</comment>
<comment type="subunit">
    <text evidence="5 8">Part of the mRNA splicing-dependent exon junction complex (EJC) complex; the core complex contains btz/CASC3, eIF4AIII, mago and tsu/RBM8A (PubMed:14973490, PubMed:22961380). Interacts with btz/CASC3 and mago (PubMed:14973490). Interacts with ncm/CWC22 (PubMed:22961380).</text>
</comment>
<comment type="subcellular location">
    <subcellularLocation>
        <location evidence="5">Nucleus</location>
    </subcellularLocation>
</comment>
<comment type="developmental stage">
    <text evidence="5">Localizes to the posterior pole of the oocyte during stages 1-9 of oogenesis, where it colocalizes with mago.</text>
</comment>
<comment type="similarity">
    <text evidence="4">Belongs to the DEAD box helicase family.</text>
</comment>
<gene>
    <name evidence="15" type="ORF">CG7483</name>
</gene>
<sequence>MARKNAQAEDLSNVEFETSEDVEVIPTFNAMNLKEELLRGIYAYGFEKPSAIQQRSITPIVKGRDVIAQAQSGTGKTATFSISILQSLDTTLRETQVLCLSPTRELAVQIQKVILALGDMMNVQCHVCIGGTNLGEDIRKLDYGQHIVSGTPGRVFDMIKRRVLRTRAIKMLVLDEADEMLNKGFKEQIYDVYRYLPPATQVVLISATLPHEILEMTSKFMTDPIRILVKRDELTLEGIKQFFVAVEREEWKFDTLCDLYDTLTITQAVIFCNTKRKVDWLTEKMREANFTVSSMHGDMPQKERDEIMKEFRAGQSRVLITTDVWARGIDVQQVSLVINYDLPNNRELYIHRIGRSGRFGRKGVAINFVKSDDIRILRDIEQYYSTQIDEMPMNVADLI</sequence>
<evidence type="ECO:0000255" key="1">
    <source>
        <dbReference type="PROSITE-ProRule" id="PRU00541"/>
    </source>
</evidence>
<evidence type="ECO:0000255" key="2">
    <source>
        <dbReference type="PROSITE-ProRule" id="PRU00542"/>
    </source>
</evidence>
<evidence type="ECO:0000255" key="3">
    <source>
        <dbReference type="PROSITE-ProRule" id="PRU00552"/>
    </source>
</evidence>
<evidence type="ECO:0000255" key="4">
    <source>
        <dbReference type="RuleBase" id="RU000492"/>
    </source>
</evidence>
<evidence type="ECO:0000269" key="5">
    <source>
    </source>
</evidence>
<evidence type="ECO:0000269" key="6">
    <source>
    </source>
</evidence>
<evidence type="ECO:0000269" key="7">
    <source>
    </source>
</evidence>
<evidence type="ECO:0000269" key="8">
    <source>
    </source>
</evidence>
<evidence type="ECO:0000303" key="9">
    <source>
    </source>
</evidence>
<evidence type="ECO:0000303" key="10">
    <source>
    </source>
</evidence>
<evidence type="ECO:0000305" key="11"/>
<evidence type="ECO:0000312" key="12">
    <source>
        <dbReference type="EMBL" id="AAF54221.1"/>
    </source>
</evidence>
<evidence type="ECO:0000312" key="13">
    <source>
        <dbReference type="EMBL" id="AAL90373.1"/>
    </source>
</evidence>
<evidence type="ECO:0000312" key="14">
    <source>
        <dbReference type="EMBL" id="AFH89818.1"/>
    </source>
</evidence>
<evidence type="ECO:0000312" key="15">
    <source>
        <dbReference type="FlyBase" id="FBgn0037573"/>
    </source>
</evidence>
<evidence type="ECO:0000312" key="16">
    <source>
        <dbReference type="Proteomes" id="UP000000803"/>
    </source>
</evidence>
<keyword id="KW-0067">ATP-binding</keyword>
<keyword id="KW-0217">Developmental protein</keyword>
<keyword id="KW-0347">Helicase</keyword>
<keyword id="KW-0378">Hydrolase</keyword>
<keyword id="KW-0507">mRNA processing</keyword>
<keyword id="KW-0508">mRNA splicing</keyword>
<keyword id="KW-0509">mRNA transport</keyword>
<keyword id="KW-0547">Nucleotide-binding</keyword>
<keyword id="KW-0539">Nucleus</keyword>
<keyword id="KW-1185">Reference proteome</keyword>
<keyword id="KW-0694">RNA-binding</keyword>
<keyword id="KW-0813">Transport</keyword>
<dbReference type="EC" id="3.6.4.13" evidence="10"/>
<dbReference type="EMBL" id="AE014297">
    <property type="protein sequence ID" value="AAF54221.1"/>
    <property type="molecule type" value="Genomic_DNA"/>
</dbReference>
<dbReference type="EMBL" id="AY089635">
    <property type="protein sequence ID" value="AAL90373.1"/>
    <property type="molecule type" value="mRNA"/>
</dbReference>
<dbReference type="EMBL" id="BT133445">
    <property type="protein sequence ID" value="AFH89818.1"/>
    <property type="molecule type" value="mRNA"/>
</dbReference>
<dbReference type="RefSeq" id="NP_649788.2">
    <property type="nucleotide sequence ID" value="NM_141531.3"/>
</dbReference>
<dbReference type="SMR" id="Q9VHS8"/>
<dbReference type="BioGRID" id="66168">
    <property type="interactions" value="28"/>
</dbReference>
<dbReference type="FunCoup" id="Q9VHS8">
    <property type="interactions" value="2244"/>
</dbReference>
<dbReference type="IntAct" id="Q9VHS8">
    <property type="interactions" value="32"/>
</dbReference>
<dbReference type="STRING" id="7227.FBpp0081324"/>
<dbReference type="PaxDb" id="7227-FBpp0081324"/>
<dbReference type="ABCD" id="Q9VHS8">
    <property type="antibodies" value="2 sequenced antibodies"/>
</dbReference>
<dbReference type="EnsemblMetazoa" id="FBtr0081834">
    <property type="protein sequence ID" value="FBpp0081324"/>
    <property type="gene ID" value="FBgn0037573"/>
</dbReference>
<dbReference type="GeneID" id="40987"/>
<dbReference type="KEGG" id="dme:Dmel_CG7483"/>
<dbReference type="UCSC" id="CG7483-RA">
    <property type="organism name" value="d. melanogaster"/>
</dbReference>
<dbReference type="AGR" id="FB:FBgn0037573"/>
<dbReference type="FlyBase" id="FBgn0037573">
    <property type="gene designation" value="CG7483"/>
</dbReference>
<dbReference type="VEuPathDB" id="VectorBase:FBgn0037573"/>
<dbReference type="eggNOG" id="KOG0328">
    <property type="taxonomic scope" value="Eukaryota"/>
</dbReference>
<dbReference type="GeneTree" id="ENSGT00940000155037"/>
<dbReference type="HOGENOM" id="CLU_003041_1_0_1"/>
<dbReference type="InParanoid" id="Q9VHS8"/>
<dbReference type="OMA" id="PENYMHR"/>
<dbReference type="OrthoDB" id="10265785at2759"/>
<dbReference type="PhylomeDB" id="Q9VHS8"/>
<dbReference type="Reactome" id="R-DME-1169408">
    <property type="pathway name" value="ISG15 antiviral mechanism"/>
</dbReference>
<dbReference type="Reactome" id="R-DME-159236">
    <property type="pathway name" value="Transport of Mature mRNA derived from an Intron-Containing Transcript"/>
</dbReference>
<dbReference type="Reactome" id="R-DME-72163">
    <property type="pathway name" value="mRNA Splicing - Major Pathway"/>
</dbReference>
<dbReference type="Reactome" id="R-DME-72187">
    <property type="pathway name" value="mRNA 3'-end processing"/>
</dbReference>
<dbReference type="Reactome" id="R-DME-73856">
    <property type="pathway name" value="RNA Polymerase II Transcription Termination"/>
</dbReference>
<dbReference type="Reactome" id="R-DME-975957">
    <property type="pathway name" value="Nonsense Mediated Decay (NMD) enhanced by the Exon Junction Complex (EJC)"/>
</dbReference>
<dbReference type="BioGRID-ORCS" id="40987">
    <property type="hits" value="1 hit in 1 CRISPR screen"/>
</dbReference>
<dbReference type="ChiTaRS" id="eIF4AIII">
    <property type="organism name" value="fly"/>
</dbReference>
<dbReference type="GenomeRNAi" id="40987"/>
<dbReference type="PRO" id="PR:Q9VHS8"/>
<dbReference type="Proteomes" id="UP000000803">
    <property type="component" value="Chromosome 3R"/>
</dbReference>
<dbReference type="Bgee" id="FBgn0037573">
    <property type="expression patterns" value="Expressed in eye disc (Drosophila) and 91 other cell types or tissues"/>
</dbReference>
<dbReference type="GO" id="GO:0071013">
    <property type="term" value="C:catalytic step 2 spliceosome"/>
    <property type="evidence" value="ECO:0007005"/>
    <property type="project" value="FlyBase"/>
</dbReference>
<dbReference type="GO" id="GO:0005730">
    <property type="term" value="C:nucleolus"/>
    <property type="evidence" value="ECO:0000318"/>
    <property type="project" value="GO_Central"/>
</dbReference>
<dbReference type="GO" id="GO:0005634">
    <property type="term" value="C:nucleus"/>
    <property type="evidence" value="ECO:0000314"/>
    <property type="project" value="FlyBase"/>
</dbReference>
<dbReference type="GO" id="GO:0045495">
    <property type="term" value="C:pole plasm"/>
    <property type="evidence" value="ECO:0000314"/>
    <property type="project" value="FlyBase"/>
</dbReference>
<dbReference type="GO" id="GO:0071011">
    <property type="term" value="C:precatalytic spliceosome"/>
    <property type="evidence" value="ECO:0007005"/>
    <property type="project" value="FlyBase"/>
</dbReference>
<dbReference type="GO" id="GO:0005524">
    <property type="term" value="F:ATP binding"/>
    <property type="evidence" value="ECO:0007669"/>
    <property type="project" value="UniProtKB-KW"/>
</dbReference>
<dbReference type="GO" id="GO:0016887">
    <property type="term" value="F:ATP hydrolysis activity"/>
    <property type="evidence" value="ECO:0007669"/>
    <property type="project" value="RHEA"/>
</dbReference>
<dbReference type="GO" id="GO:0003729">
    <property type="term" value="F:mRNA binding"/>
    <property type="evidence" value="ECO:0000318"/>
    <property type="project" value="GO_Central"/>
</dbReference>
<dbReference type="GO" id="GO:0003724">
    <property type="term" value="F:RNA helicase activity"/>
    <property type="evidence" value="ECO:0000318"/>
    <property type="project" value="GO_Central"/>
</dbReference>
<dbReference type="GO" id="GO:0006325">
    <property type="term" value="P:chromatin organization"/>
    <property type="evidence" value="ECO:0000315"/>
    <property type="project" value="FlyBase"/>
</dbReference>
<dbReference type="GO" id="GO:1903040">
    <property type="term" value="P:exon-exon junction complex assembly"/>
    <property type="evidence" value="ECO:0000315"/>
    <property type="project" value="FlyBase"/>
</dbReference>
<dbReference type="GO" id="GO:0000398">
    <property type="term" value="P:mRNA splicing, via spliceosome"/>
    <property type="evidence" value="ECO:0000318"/>
    <property type="project" value="GO_Central"/>
</dbReference>
<dbReference type="GO" id="GO:0051028">
    <property type="term" value="P:mRNA transport"/>
    <property type="evidence" value="ECO:0007669"/>
    <property type="project" value="UniProtKB-KW"/>
</dbReference>
<dbReference type="GO" id="GO:0045451">
    <property type="term" value="P:pole plasm oskar mRNA localization"/>
    <property type="evidence" value="ECO:0000316"/>
    <property type="project" value="FlyBase"/>
</dbReference>
<dbReference type="GO" id="GO:0010628">
    <property type="term" value="P:positive regulation of gene expression"/>
    <property type="evidence" value="ECO:0000315"/>
    <property type="project" value="FlyBase"/>
</dbReference>
<dbReference type="GO" id="GO:0008380">
    <property type="term" value="P:RNA splicing"/>
    <property type="evidence" value="ECO:0000315"/>
    <property type="project" value="FlyBase"/>
</dbReference>
<dbReference type="CDD" id="cd18045">
    <property type="entry name" value="DEADc_EIF4AIII_DDX48"/>
    <property type="match status" value="1"/>
</dbReference>
<dbReference type="CDD" id="cd18787">
    <property type="entry name" value="SF2_C_DEAD"/>
    <property type="match status" value="1"/>
</dbReference>
<dbReference type="FunFam" id="3.40.50.300:FF:000031">
    <property type="entry name" value="Eukaryotic initiation factor 4A-III"/>
    <property type="match status" value="1"/>
</dbReference>
<dbReference type="FunFam" id="3.40.50.300:FF:000498">
    <property type="entry name" value="Eukaryotic initiation factor 4A-III"/>
    <property type="match status" value="1"/>
</dbReference>
<dbReference type="Gene3D" id="3.40.50.300">
    <property type="entry name" value="P-loop containing nucleotide triphosphate hydrolases"/>
    <property type="match status" value="2"/>
</dbReference>
<dbReference type="InterPro" id="IPR011545">
    <property type="entry name" value="DEAD/DEAH_box_helicase_dom"/>
</dbReference>
<dbReference type="InterPro" id="IPR014001">
    <property type="entry name" value="Helicase_ATP-bd"/>
</dbReference>
<dbReference type="InterPro" id="IPR001650">
    <property type="entry name" value="Helicase_C-like"/>
</dbReference>
<dbReference type="InterPro" id="IPR027417">
    <property type="entry name" value="P-loop_NTPase"/>
</dbReference>
<dbReference type="InterPro" id="IPR000629">
    <property type="entry name" value="RNA-helicase_DEAD-box_CS"/>
</dbReference>
<dbReference type="InterPro" id="IPR014014">
    <property type="entry name" value="RNA_helicase_DEAD_Q_motif"/>
</dbReference>
<dbReference type="PANTHER" id="PTHR47958">
    <property type="entry name" value="ATP-DEPENDENT RNA HELICASE DBP3"/>
    <property type="match status" value="1"/>
</dbReference>
<dbReference type="Pfam" id="PF00270">
    <property type="entry name" value="DEAD"/>
    <property type="match status" value="1"/>
</dbReference>
<dbReference type="Pfam" id="PF00271">
    <property type="entry name" value="Helicase_C"/>
    <property type="match status" value="1"/>
</dbReference>
<dbReference type="SMART" id="SM00487">
    <property type="entry name" value="DEXDc"/>
    <property type="match status" value="1"/>
</dbReference>
<dbReference type="SMART" id="SM00490">
    <property type="entry name" value="HELICc"/>
    <property type="match status" value="1"/>
</dbReference>
<dbReference type="SUPFAM" id="SSF52540">
    <property type="entry name" value="P-loop containing nucleoside triphosphate hydrolases"/>
    <property type="match status" value="1"/>
</dbReference>
<dbReference type="PROSITE" id="PS00039">
    <property type="entry name" value="DEAD_ATP_HELICASE"/>
    <property type="match status" value="1"/>
</dbReference>
<dbReference type="PROSITE" id="PS51192">
    <property type="entry name" value="HELICASE_ATP_BIND_1"/>
    <property type="match status" value="1"/>
</dbReference>
<dbReference type="PROSITE" id="PS51194">
    <property type="entry name" value="HELICASE_CTER"/>
    <property type="match status" value="1"/>
</dbReference>
<dbReference type="PROSITE" id="PS51195">
    <property type="entry name" value="Q_MOTIF"/>
    <property type="match status" value="1"/>
</dbReference>
<accession>Q9VHS8</accession>
<accession>Q8SXH3</accession>
<feature type="chain" id="PRO_0000431242" description="Eukaryotic initiation factor 4A-III" evidence="11">
    <location>
        <begin position="1"/>
        <end position="399"/>
    </location>
</feature>
<feature type="domain" description="Helicase ATP-binding" evidence="1">
    <location>
        <begin position="57"/>
        <end position="227"/>
    </location>
</feature>
<feature type="domain" description="Helicase C-terminal" evidence="2">
    <location>
        <begin position="238"/>
        <end position="399"/>
    </location>
</feature>
<feature type="short sequence motif" description="Q motif" evidence="3">
    <location>
        <begin position="26"/>
        <end position="54"/>
    </location>
</feature>
<feature type="short sequence motif" description="DEAD box" evidence="1">
    <location>
        <begin position="175"/>
        <end position="178"/>
    </location>
</feature>
<feature type="binding site" evidence="1">
    <location>
        <begin position="70"/>
        <end position="77"/>
    </location>
    <ligand>
        <name>ATP</name>
        <dbReference type="ChEBI" id="CHEBI:30616"/>
    </ligand>
</feature>
<feature type="mutagenesis site" description="In allele eIF4AIII-19; homozygous oocytes are non-viable." evidence="5">
    <original>G</original>
    <variation>S</variation>
    <location>
        <position position="150"/>
    </location>
</feature>
<feature type="sequence conflict" description="In Ref. 3; AAL90373." ref="3">
    <original>M</original>
    <variation>V</variation>
    <location>
        <position position="393"/>
    </location>
</feature>
<name>IF4A3_DROME</name>
<reference evidence="12" key="1">
    <citation type="journal article" date="2000" name="Science">
        <title>The genome sequence of Drosophila melanogaster.</title>
        <authorList>
            <person name="Adams M.D."/>
            <person name="Celniker S.E."/>
            <person name="Holt R.A."/>
            <person name="Evans C.A."/>
            <person name="Gocayne J.D."/>
            <person name="Amanatides P.G."/>
            <person name="Scherer S.E."/>
            <person name="Li P.W."/>
            <person name="Hoskins R.A."/>
            <person name="Galle R.F."/>
            <person name="George R.A."/>
            <person name="Lewis S.E."/>
            <person name="Richards S."/>
            <person name="Ashburner M."/>
            <person name="Henderson S.N."/>
            <person name="Sutton G.G."/>
            <person name="Wortman J.R."/>
            <person name="Yandell M.D."/>
            <person name="Zhang Q."/>
            <person name="Chen L.X."/>
            <person name="Brandon R.C."/>
            <person name="Rogers Y.-H.C."/>
            <person name="Blazej R.G."/>
            <person name="Champe M."/>
            <person name="Pfeiffer B.D."/>
            <person name="Wan K.H."/>
            <person name="Doyle C."/>
            <person name="Baxter E.G."/>
            <person name="Helt G."/>
            <person name="Nelson C.R."/>
            <person name="Miklos G.L.G."/>
            <person name="Abril J.F."/>
            <person name="Agbayani A."/>
            <person name="An H.-J."/>
            <person name="Andrews-Pfannkoch C."/>
            <person name="Baldwin D."/>
            <person name="Ballew R.M."/>
            <person name="Basu A."/>
            <person name="Baxendale J."/>
            <person name="Bayraktaroglu L."/>
            <person name="Beasley E.M."/>
            <person name="Beeson K.Y."/>
            <person name="Benos P.V."/>
            <person name="Berman B.P."/>
            <person name="Bhandari D."/>
            <person name="Bolshakov S."/>
            <person name="Borkova D."/>
            <person name="Botchan M.R."/>
            <person name="Bouck J."/>
            <person name="Brokstein P."/>
            <person name="Brottier P."/>
            <person name="Burtis K.C."/>
            <person name="Busam D.A."/>
            <person name="Butler H."/>
            <person name="Cadieu E."/>
            <person name="Center A."/>
            <person name="Chandra I."/>
            <person name="Cherry J.M."/>
            <person name="Cawley S."/>
            <person name="Dahlke C."/>
            <person name="Davenport L.B."/>
            <person name="Davies P."/>
            <person name="de Pablos B."/>
            <person name="Delcher A."/>
            <person name="Deng Z."/>
            <person name="Mays A.D."/>
            <person name="Dew I."/>
            <person name="Dietz S.M."/>
            <person name="Dodson K."/>
            <person name="Doup L.E."/>
            <person name="Downes M."/>
            <person name="Dugan-Rocha S."/>
            <person name="Dunkov B.C."/>
            <person name="Dunn P."/>
            <person name="Durbin K.J."/>
            <person name="Evangelista C.C."/>
            <person name="Ferraz C."/>
            <person name="Ferriera S."/>
            <person name="Fleischmann W."/>
            <person name="Fosler C."/>
            <person name="Gabrielian A.E."/>
            <person name="Garg N.S."/>
            <person name="Gelbart W.M."/>
            <person name="Glasser K."/>
            <person name="Glodek A."/>
            <person name="Gong F."/>
            <person name="Gorrell J.H."/>
            <person name="Gu Z."/>
            <person name="Guan P."/>
            <person name="Harris M."/>
            <person name="Harris N.L."/>
            <person name="Harvey D.A."/>
            <person name="Heiman T.J."/>
            <person name="Hernandez J.R."/>
            <person name="Houck J."/>
            <person name="Hostin D."/>
            <person name="Houston K.A."/>
            <person name="Howland T.J."/>
            <person name="Wei M.-H."/>
            <person name="Ibegwam C."/>
            <person name="Jalali M."/>
            <person name="Kalush F."/>
            <person name="Karpen G.H."/>
            <person name="Ke Z."/>
            <person name="Kennison J.A."/>
            <person name="Ketchum K.A."/>
            <person name="Kimmel B.E."/>
            <person name="Kodira C.D."/>
            <person name="Kraft C.L."/>
            <person name="Kravitz S."/>
            <person name="Kulp D."/>
            <person name="Lai Z."/>
            <person name="Lasko P."/>
            <person name="Lei Y."/>
            <person name="Levitsky A.A."/>
            <person name="Li J.H."/>
            <person name="Li Z."/>
            <person name="Liang Y."/>
            <person name="Lin X."/>
            <person name="Liu X."/>
            <person name="Mattei B."/>
            <person name="McIntosh T.C."/>
            <person name="McLeod M.P."/>
            <person name="McPherson D."/>
            <person name="Merkulov G."/>
            <person name="Milshina N.V."/>
            <person name="Mobarry C."/>
            <person name="Morris J."/>
            <person name="Moshrefi A."/>
            <person name="Mount S.M."/>
            <person name="Moy M."/>
            <person name="Murphy B."/>
            <person name="Murphy L."/>
            <person name="Muzny D.M."/>
            <person name="Nelson D.L."/>
            <person name="Nelson D.R."/>
            <person name="Nelson K.A."/>
            <person name="Nixon K."/>
            <person name="Nusskern D.R."/>
            <person name="Pacleb J.M."/>
            <person name="Palazzolo M."/>
            <person name="Pittman G.S."/>
            <person name="Pan S."/>
            <person name="Pollard J."/>
            <person name="Puri V."/>
            <person name="Reese M.G."/>
            <person name="Reinert K."/>
            <person name="Remington K."/>
            <person name="Saunders R.D.C."/>
            <person name="Scheeler F."/>
            <person name="Shen H."/>
            <person name="Shue B.C."/>
            <person name="Siden-Kiamos I."/>
            <person name="Simpson M."/>
            <person name="Skupski M.P."/>
            <person name="Smith T.J."/>
            <person name="Spier E."/>
            <person name="Spradling A.C."/>
            <person name="Stapleton M."/>
            <person name="Strong R."/>
            <person name="Sun E."/>
            <person name="Svirskas R."/>
            <person name="Tector C."/>
            <person name="Turner R."/>
            <person name="Venter E."/>
            <person name="Wang A.H."/>
            <person name="Wang X."/>
            <person name="Wang Z.-Y."/>
            <person name="Wassarman D.A."/>
            <person name="Weinstock G.M."/>
            <person name="Weissenbach J."/>
            <person name="Williams S.M."/>
            <person name="Woodage T."/>
            <person name="Worley K.C."/>
            <person name="Wu D."/>
            <person name="Yang S."/>
            <person name="Yao Q.A."/>
            <person name="Ye J."/>
            <person name="Yeh R.-F."/>
            <person name="Zaveri J.S."/>
            <person name="Zhan M."/>
            <person name="Zhang G."/>
            <person name="Zhao Q."/>
            <person name="Zheng L."/>
            <person name="Zheng X.H."/>
            <person name="Zhong F.N."/>
            <person name="Zhong W."/>
            <person name="Zhou X."/>
            <person name="Zhu S.C."/>
            <person name="Zhu X."/>
            <person name="Smith H.O."/>
            <person name="Gibbs R.A."/>
            <person name="Myers E.W."/>
            <person name="Rubin G.M."/>
            <person name="Venter J.C."/>
        </authorList>
    </citation>
    <scope>NUCLEOTIDE SEQUENCE [LARGE SCALE GENOMIC DNA]</scope>
    <source>
        <strain evidence="16">Berkeley</strain>
    </source>
</reference>
<reference evidence="12" key="2">
    <citation type="journal article" date="2002" name="Genome Biol.">
        <title>Annotation of the Drosophila melanogaster euchromatic genome: a systematic review.</title>
        <authorList>
            <person name="Misra S."/>
            <person name="Crosby M.A."/>
            <person name="Mungall C.J."/>
            <person name="Matthews B.B."/>
            <person name="Campbell K.S."/>
            <person name="Hradecky P."/>
            <person name="Huang Y."/>
            <person name="Kaminker J.S."/>
            <person name="Millburn G.H."/>
            <person name="Prochnik S.E."/>
            <person name="Smith C.D."/>
            <person name="Tupy J.L."/>
            <person name="Whitfield E.J."/>
            <person name="Bayraktaroglu L."/>
            <person name="Berman B.P."/>
            <person name="Bettencourt B.R."/>
            <person name="Celniker S.E."/>
            <person name="de Grey A.D.N.J."/>
            <person name="Drysdale R.A."/>
            <person name="Harris N.L."/>
            <person name="Richter J."/>
            <person name="Russo S."/>
            <person name="Schroeder A.J."/>
            <person name="Shu S.Q."/>
            <person name="Stapleton M."/>
            <person name="Yamada C."/>
            <person name="Ashburner M."/>
            <person name="Gelbart W.M."/>
            <person name="Rubin G.M."/>
            <person name="Lewis S.E."/>
        </authorList>
    </citation>
    <scope>GENOME REANNOTATION</scope>
    <source>
        <strain evidence="16">Berkeley</strain>
    </source>
</reference>
<reference evidence="13" key="3">
    <citation type="submission" date="2002-03" db="EMBL/GenBank/DDBJ databases">
        <authorList>
            <person name="Stapleton M."/>
            <person name="Brokstein P."/>
            <person name="Hong L."/>
            <person name="Agbayani A."/>
            <person name="Carlson J."/>
            <person name="Champe M."/>
            <person name="Chavez C."/>
            <person name="Dorsett V."/>
            <person name="Dresnek D."/>
            <person name="Farfan D."/>
            <person name="Frise E."/>
            <person name="George R."/>
            <person name="Gonzalez M."/>
            <person name="Guarin H."/>
            <person name="Kronmiller B."/>
            <person name="Li P."/>
            <person name="Liao G."/>
            <person name="Miranda A."/>
            <person name="Mungall C.J."/>
            <person name="Nunoo J."/>
            <person name="Pacleb J."/>
            <person name="Paragas V."/>
            <person name="Park S."/>
            <person name="Patel S."/>
            <person name="Phouanenavong S."/>
            <person name="Wan K."/>
            <person name="Yu C."/>
            <person name="Lewis S.E."/>
            <person name="Rubin G.M."/>
            <person name="Celniker S."/>
        </authorList>
    </citation>
    <scope>NUCLEOTIDE SEQUENCE [MRNA]</scope>
    <source>
        <strain evidence="13">Berkeley</strain>
    </source>
</reference>
<reference evidence="14" key="4">
    <citation type="submission" date="2012-04" db="EMBL/GenBank/DDBJ databases">
        <authorList>
            <person name="Carlson J."/>
            <person name="Booth B."/>
            <person name="Frise E."/>
            <person name="Park S."/>
            <person name="Wan K."/>
            <person name="Yu C."/>
            <person name="Celniker S."/>
        </authorList>
    </citation>
    <scope>NUCLEOTIDE SEQUENCE [MRNA]</scope>
</reference>
<reference evidence="11" key="5">
    <citation type="journal article" date="2004" name="Nature">
        <title>An eIF4AIII-containing complex required for mRNA localization and nonsense-mediated mRNA decay.</title>
        <authorList>
            <person name="Palacios I.M."/>
            <person name="Gatfield D."/>
            <person name="St Johnston D."/>
            <person name="Izaurralde E."/>
        </authorList>
    </citation>
    <scope>FUNCTION</scope>
    <scope>IDENTIFICATION IN THE EJC COMPLEX</scope>
    <scope>INTERACTION WITH BTZ; MAGO AND TSU</scope>
    <scope>SUBCELLULAR LOCATION</scope>
    <scope>DEVELOPMENTAL STAGE</scope>
    <scope>MUTAGENESIS OF GLY-150</scope>
</reference>
<reference evidence="11" key="6">
    <citation type="journal article" date="2010" name="Cell">
        <title>Exon junction complex subunits are required to splice Drosophila MAP kinase, a large heterochromatic gene.</title>
        <authorList>
            <person name="Roignant J.Y."/>
            <person name="Treisman J.E."/>
        </authorList>
    </citation>
    <scope>FUNCTION</scope>
</reference>
<reference evidence="11" key="7">
    <citation type="journal article" date="2010" name="Cell">
        <title>The exon junction complex controls the splicing of MAPK and other long intron-containing transcripts in Drosophila.</title>
        <authorList>
            <person name="Ashton-Beaucage D."/>
            <person name="Udell C.M."/>
            <person name="Lavoie H."/>
            <person name="Baril C."/>
            <person name="Lefrancois M."/>
            <person name="Chagnon P."/>
            <person name="Gendron P."/>
            <person name="Caron-Lizotte O."/>
            <person name="Bonneil E."/>
            <person name="Thibault P."/>
            <person name="Therrien M."/>
        </authorList>
    </citation>
    <scope>FUNCTION</scope>
</reference>
<reference evidence="11" key="8">
    <citation type="journal article" date="2012" name="Nat. Struct. Mol. Biol.">
        <title>Human CWC22 escorts the helicase eIF4AIII to spliceosomes and promotes exon junction complex assembly.</title>
        <authorList>
            <person name="Barbosa I."/>
            <person name="Haque N."/>
            <person name="Fiorini F."/>
            <person name="Barrandon C."/>
            <person name="Tomasetto C."/>
            <person name="Blanchette M."/>
            <person name="Le Hir H."/>
        </authorList>
    </citation>
    <scope>CATALYTIC ACTIVITY</scope>
    <scope>IDENTIFICATION IN THE EJC COMPLEX</scope>
    <scope>INTERACTION WITH NCM</scope>
</reference>
<organism evidence="12">
    <name type="scientific">Drosophila melanogaster</name>
    <name type="common">Fruit fly</name>
    <dbReference type="NCBI Taxonomy" id="7227"/>
    <lineage>
        <taxon>Eukaryota</taxon>
        <taxon>Metazoa</taxon>
        <taxon>Ecdysozoa</taxon>
        <taxon>Arthropoda</taxon>
        <taxon>Hexapoda</taxon>
        <taxon>Insecta</taxon>
        <taxon>Pterygota</taxon>
        <taxon>Neoptera</taxon>
        <taxon>Endopterygota</taxon>
        <taxon>Diptera</taxon>
        <taxon>Brachycera</taxon>
        <taxon>Muscomorpha</taxon>
        <taxon>Ephydroidea</taxon>
        <taxon>Drosophilidae</taxon>
        <taxon>Drosophila</taxon>
        <taxon>Sophophora</taxon>
    </lineage>
</organism>
<proteinExistence type="evidence at protein level"/>